<accession>P69576</accession>
<accession>P52775</accession>
<organism>
    <name type="scientific">Lupinus arboreus</name>
    <name type="common">Tree lupine</name>
    <dbReference type="NCBI Taxonomy" id="3872"/>
    <lineage>
        <taxon>Eukaryota</taxon>
        <taxon>Viridiplantae</taxon>
        <taxon>Streptophyta</taxon>
        <taxon>Embryophyta</taxon>
        <taxon>Tracheophyta</taxon>
        <taxon>Spermatophyta</taxon>
        <taxon>Magnoliopsida</taxon>
        <taxon>eudicotyledons</taxon>
        <taxon>Gunneridae</taxon>
        <taxon>Pentapetalae</taxon>
        <taxon>rosids</taxon>
        <taxon>fabids</taxon>
        <taxon>Fabales</taxon>
        <taxon>Fabaceae</taxon>
        <taxon>Papilionoideae</taxon>
        <taxon>50 kb inversion clade</taxon>
        <taxon>genistoids sensu lato</taxon>
        <taxon>core genistoids</taxon>
        <taxon>Genisteae</taxon>
        <taxon>Lupinus</taxon>
    </lineage>
</organism>
<reference key="1">
    <citation type="journal article" date="1995" name="Bot. Acta">
        <title>Molecular phylogeny of the Papilionoideae (family Leguminosae): rbcL sequences versus chemical taxonomy.</title>
        <authorList>
            <person name="Kaess E."/>
            <person name="Wink M."/>
        </authorList>
    </citation>
    <scope>NUCLEOTIDE SEQUENCE [GENOMIC DNA]</scope>
    <source>
        <tissue>Leaf</tissue>
    </source>
</reference>
<sequence>SVGFKAGVKDYKLTYYTPDYKTKDTDILAAFRVTPQPGVPPEEAGAAVAAESSTGTWTTVWTDGLTSLDRYKGRCYHIEPVAGEESQFIAYVAYPLDLFEEGSVTNMFTSIVGNVFGFKALRALRLEDLRIPNAYVKTFQGPPHGIQVERDKLNKYGRPLLGCTIKPKLGLSAKNYGRAVYECLRGGLDFTKDDENVNSQPFMRWRDRFLFCAEALYKAQAETGEIKGHYLNATAGTCEEMIKRAVFARELGVPIVMHDYLTGGFTANTTLSHYCRDNGLLLHIHRAMHAVIDRQKNHGMHFRVLAKALRLSGGDHIHSGTVVGKLEGEREITLGFVDLLRDDFVEKDRSRGIYFTQDWVSLPGVLPVASGGIHVWHMPALTEIFGDDSVLQFGGGTLGHPWGNAPGAVANRVALEACVQARNEGRDLASEGNQIIREASKWSPELAAACEVWKE</sequence>
<protein>
    <recommendedName>
        <fullName evidence="1">Ribulose bisphosphate carboxylase large chain</fullName>
        <shortName evidence="1">RuBisCO large subunit</shortName>
        <ecNumber evidence="1">4.1.1.39</ecNumber>
    </recommendedName>
</protein>
<proteinExistence type="inferred from homology"/>
<feature type="chain" id="PRO_0000062510" description="Ribulose bisphosphate carboxylase large chain">
    <location>
        <begin position="1" status="less than"/>
        <end position="455" status="greater than"/>
    </location>
</feature>
<feature type="active site" description="Proton acceptor" evidence="1">
    <location>
        <position position="166"/>
    </location>
</feature>
<feature type="active site" description="Proton acceptor" evidence="1">
    <location>
        <position position="285"/>
    </location>
</feature>
<feature type="binding site" description="in homodimeric partner" evidence="1">
    <location>
        <position position="114"/>
    </location>
    <ligand>
        <name>substrate</name>
    </ligand>
</feature>
<feature type="binding site" evidence="1">
    <location>
        <position position="164"/>
    </location>
    <ligand>
        <name>substrate</name>
    </ligand>
</feature>
<feature type="binding site" evidence="1">
    <location>
        <position position="168"/>
    </location>
    <ligand>
        <name>substrate</name>
    </ligand>
</feature>
<feature type="binding site" description="via carbamate group" evidence="1">
    <location>
        <position position="192"/>
    </location>
    <ligand>
        <name>Mg(2+)</name>
        <dbReference type="ChEBI" id="CHEBI:18420"/>
    </ligand>
</feature>
<feature type="binding site" evidence="1">
    <location>
        <position position="194"/>
    </location>
    <ligand>
        <name>Mg(2+)</name>
        <dbReference type="ChEBI" id="CHEBI:18420"/>
    </ligand>
</feature>
<feature type="binding site" evidence="1">
    <location>
        <position position="195"/>
    </location>
    <ligand>
        <name>Mg(2+)</name>
        <dbReference type="ChEBI" id="CHEBI:18420"/>
    </ligand>
</feature>
<feature type="binding site" evidence="1">
    <location>
        <position position="286"/>
    </location>
    <ligand>
        <name>substrate</name>
    </ligand>
</feature>
<feature type="binding site" evidence="1">
    <location>
        <position position="318"/>
    </location>
    <ligand>
        <name>substrate</name>
    </ligand>
</feature>
<feature type="binding site" evidence="1">
    <location>
        <position position="370"/>
    </location>
    <ligand>
        <name>substrate</name>
    </ligand>
</feature>
<feature type="site" description="Transition state stabilizer" evidence="1">
    <location>
        <position position="325"/>
    </location>
</feature>
<feature type="modified residue" description="N6,N6,N6-trimethyllysine" evidence="1">
    <location>
        <position position="5"/>
    </location>
</feature>
<feature type="modified residue" description="N6-carboxylysine" evidence="1">
    <location>
        <position position="192"/>
    </location>
</feature>
<feature type="disulfide bond" description="Interchain; in linked form" evidence="1">
    <location>
        <position position="238"/>
    </location>
</feature>
<feature type="non-terminal residue">
    <location>
        <position position="1"/>
    </location>
</feature>
<feature type="non-terminal residue">
    <location>
        <position position="455"/>
    </location>
</feature>
<geneLocation type="chloroplast"/>
<comment type="function">
    <text evidence="1">RuBisCO catalyzes two reactions: the carboxylation of D-ribulose 1,5-bisphosphate, the primary event in carbon dioxide fixation, as well as the oxidative fragmentation of the pentose substrate in the photorespiration process. Both reactions occur simultaneously and in competition at the same active site.</text>
</comment>
<comment type="catalytic activity">
    <reaction evidence="1">
        <text>2 (2R)-3-phosphoglycerate + 2 H(+) = D-ribulose 1,5-bisphosphate + CO2 + H2O</text>
        <dbReference type="Rhea" id="RHEA:23124"/>
        <dbReference type="ChEBI" id="CHEBI:15377"/>
        <dbReference type="ChEBI" id="CHEBI:15378"/>
        <dbReference type="ChEBI" id="CHEBI:16526"/>
        <dbReference type="ChEBI" id="CHEBI:57870"/>
        <dbReference type="ChEBI" id="CHEBI:58272"/>
        <dbReference type="EC" id="4.1.1.39"/>
    </reaction>
</comment>
<comment type="catalytic activity">
    <reaction evidence="1">
        <text>D-ribulose 1,5-bisphosphate + O2 = 2-phosphoglycolate + (2R)-3-phosphoglycerate + 2 H(+)</text>
        <dbReference type="Rhea" id="RHEA:36631"/>
        <dbReference type="ChEBI" id="CHEBI:15378"/>
        <dbReference type="ChEBI" id="CHEBI:15379"/>
        <dbReference type="ChEBI" id="CHEBI:57870"/>
        <dbReference type="ChEBI" id="CHEBI:58033"/>
        <dbReference type="ChEBI" id="CHEBI:58272"/>
    </reaction>
</comment>
<comment type="cofactor">
    <cofactor evidence="1">
        <name>Mg(2+)</name>
        <dbReference type="ChEBI" id="CHEBI:18420"/>
    </cofactor>
    <text evidence="1">Binds 1 Mg(2+) ion per subunit.</text>
</comment>
<comment type="subunit">
    <text evidence="1">Heterohexadecamer of 8 large chains and 8 small chains; disulfide-linked. The disulfide link is formed within the large subunit homodimers.</text>
</comment>
<comment type="subcellular location">
    <subcellularLocation>
        <location>Plastid</location>
        <location>Chloroplast</location>
    </subcellularLocation>
</comment>
<comment type="PTM">
    <text evidence="1">The disulfide bond which can form in the large chain dimeric partners within the hexadecamer appears to be associated with oxidative stress and protein turnover.</text>
</comment>
<comment type="miscellaneous">
    <text evidence="1">The basic functional RuBisCO is composed of a large chain homodimer in a 'head-to-tail' conformation. In form I RuBisCO this homodimer is arranged in a barrel-like tetramer with the small subunits forming a tetrameric 'cap' on each end of the 'barrel'.</text>
</comment>
<comment type="similarity">
    <text evidence="1">Belongs to the RuBisCO large chain family. Type I subfamily.</text>
</comment>
<dbReference type="EC" id="4.1.1.39" evidence="1"/>
<dbReference type="EMBL" id="Z70054">
    <property type="protein sequence ID" value="CAA93913.1"/>
    <property type="molecule type" value="Genomic_DNA"/>
</dbReference>
<dbReference type="SMR" id="P69576"/>
<dbReference type="GO" id="GO:0009507">
    <property type="term" value="C:chloroplast"/>
    <property type="evidence" value="ECO:0007669"/>
    <property type="project" value="UniProtKB-SubCell"/>
</dbReference>
<dbReference type="GO" id="GO:0000287">
    <property type="term" value="F:magnesium ion binding"/>
    <property type="evidence" value="ECO:0007669"/>
    <property type="project" value="InterPro"/>
</dbReference>
<dbReference type="GO" id="GO:0004497">
    <property type="term" value="F:monooxygenase activity"/>
    <property type="evidence" value="ECO:0007669"/>
    <property type="project" value="UniProtKB-KW"/>
</dbReference>
<dbReference type="GO" id="GO:0016984">
    <property type="term" value="F:ribulose-bisphosphate carboxylase activity"/>
    <property type="evidence" value="ECO:0007669"/>
    <property type="project" value="UniProtKB-EC"/>
</dbReference>
<dbReference type="GO" id="GO:0009853">
    <property type="term" value="P:photorespiration"/>
    <property type="evidence" value="ECO:0007669"/>
    <property type="project" value="UniProtKB-KW"/>
</dbReference>
<dbReference type="GO" id="GO:0019253">
    <property type="term" value="P:reductive pentose-phosphate cycle"/>
    <property type="evidence" value="ECO:0007669"/>
    <property type="project" value="UniProtKB-KW"/>
</dbReference>
<dbReference type="CDD" id="cd08212">
    <property type="entry name" value="RuBisCO_large_I"/>
    <property type="match status" value="1"/>
</dbReference>
<dbReference type="FunFam" id="3.20.20.110:FF:000001">
    <property type="entry name" value="Ribulose bisphosphate carboxylase large chain"/>
    <property type="match status" value="1"/>
</dbReference>
<dbReference type="FunFam" id="3.30.70.150:FF:000001">
    <property type="entry name" value="Ribulose bisphosphate carboxylase large chain"/>
    <property type="match status" value="1"/>
</dbReference>
<dbReference type="Gene3D" id="3.20.20.110">
    <property type="entry name" value="Ribulose bisphosphate carboxylase, large subunit, C-terminal domain"/>
    <property type="match status" value="1"/>
</dbReference>
<dbReference type="Gene3D" id="3.30.70.150">
    <property type="entry name" value="RuBisCO large subunit, N-terminal domain"/>
    <property type="match status" value="1"/>
</dbReference>
<dbReference type="HAMAP" id="MF_01338">
    <property type="entry name" value="RuBisCO_L_type1"/>
    <property type="match status" value="1"/>
</dbReference>
<dbReference type="InterPro" id="IPR033966">
    <property type="entry name" value="RuBisCO"/>
</dbReference>
<dbReference type="InterPro" id="IPR020878">
    <property type="entry name" value="RuBisCo_large_chain_AS"/>
</dbReference>
<dbReference type="InterPro" id="IPR000685">
    <property type="entry name" value="RuBisCO_lsu_C"/>
</dbReference>
<dbReference type="InterPro" id="IPR036376">
    <property type="entry name" value="RuBisCO_lsu_C_sf"/>
</dbReference>
<dbReference type="InterPro" id="IPR017443">
    <property type="entry name" value="RuBisCO_lsu_fd_N"/>
</dbReference>
<dbReference type="InterPro" id="IPR036422">
    <property type="entry name" value="RuBisCO_lsu_N_sf"/>
</dbReference>
<dbReference type="InterPro" id="IPR020888">
    <property type="entry name" value="RuBisCO_lsuI"/>
</dbReference>
<dbReference type="NCBIfam" id="NF003252">
    <property type="entry name" value="PRK04208.1"/>
    <property type="match status" value="1"/>
</dbReference>
<dbReference type="PANTHER" id="PTHR42704">
    <property type="entry name" value="RIBULOSE BISPHOSPHATE CARBOXYLASE"/>
    <property type="match status" value="1"/>
</dbReference>
<dbReference type="PANTHER" id="PTHR42704:SF16">
    <property type="entry name" value="RIBULOSE BISPHOSPHATE CARBOXYLASE LARGE CHAIN"/>
    <property type="match status" value="1"/>
</dbReference>
<dbReference type="Pfam" id="PF00016">
    <property type="entry name" value="RuBisCO_large"/>
    <property type="match status" value="1"/>
</dbReference>
<dbReference type="Pfam" id="PF02788">
    <property type="entry name" value="RuBisCO_large_N"/>
    <property type="match status" value="1"/>
</dbReference>
<dbReference type="SFLD" id="SFLDG01052">
    <property type="entry name" value="RuBisCO"/>
    <property type="match status" value="1"/>
</dbReference>
<dbReference type="SFLD" id="SFLDS00014">
    <property type="entry name" value="RuBisCO"/>
    <property type="match status" value="1"/>
</dbReference>
<dbReference type="SFLD" id="SFLDG00301">
    <property type="entry name" value="RuBisCO-like_proteins"/>
    <property type="match status" value="1"/>
</dbReference>
<dbReference type="SUPFAM" id="SSF51649">
    <property type="entry name" value="RuBisCo, C-terminal domain"/>
    <property type="match status" value="1"/>
</dbReference>
<dbReference type="SUPFAM" id="SSF54966">
    <property type="entry name" value="RuBisCO, large subunit, small (N-terminal) domain"/>
    <property type="match status" value="1"/>
</dbReference>
<dbReference type="PROSITE" id="PS00157">
    <property type="entry name" value="RUBISCO_LARGE"/>
    <property type="match status" value="1"/>
</dbReference>
<name>RBL_LUPAR</name>
<gene>
    <name evidence="1" type="primary">rbcL</name>
</gene>
<keyword id="KW-0113">Calvin cycle</keyword>
<keyword id="KW-0120">Carbon dioxide fixation</keyword>
<keyword id="KW-0150">Chloroplast</keyword>
<keyword id="KW-1015">Disulfide bond</keyword>
<keyword id="KW-0456">Lyase</keyword>
<keyword id="KW-0460">Magnesium</keyword>
<keyword id="KW-0479">Metal-binding</keyword>
<keyword id="KW-0488">Methylation</keyword>
<keyword id="KW-0503">Monooxygenase</keyword>
<keyword id="KW-0560">Oxidoreductase</keyword>
<keyword id="KW-0601">Photorespiration</keyword>
<keyword id="KW-0602">Photosynthesis</keyword>
<keyword id="KW-0934">Plastid</keyword>
<evidence type="ECO:0000255" key="1">
    <source>
        <dbReference type="HAMAP-Rule" id="MF_01338"/>
    </source>
</evidence>